<proteinExistence type="evidence at protein level"/>
<comment type="function">
    <text>Exhibits a high coumarin 7-hydroxylase activity.</text>
</comment>
<comment type="catalytic activity">
    <reaction>
        <text>an organic molecule + reduced [NADPH--hemoprotein reductase] + O2 = an alcohol + oxidized [NADPH--hemoprotein reductase] + H2O + H(+)</text>
        <dbReference type="Rhea" id="RHEA:17149"/>
        <dbReference type="Rhea" id="RHEA-COMP:11964"/>
        <dbReference type="Rhea" id="RHEA-COMP:11965"/>
        <dbReference type="ChEBI" id="CHEBI:15377"/>
        <dbReference type="ChEBI" id="CHEBI:15378"/>
        <dbReference type="ChEBI" id="CHEBI:15379"/>
        <dbReference type="ChEBI" id="CHEBI:30879"/>
        <dbReference type="ChEBI" id="CHEBI:57618"/>
        <dbReference type="ChEBI" id="CHEBI:58210"/>
        <dbReference type="ChEBI" id="CHEBI:142491"/>
        <dbReference type="EC" id="1.14.14.1"/>
    </reaction>
</comment>
<comment type="cofactor">
    <cofactor evidence="1">
        <name>heme</name>
        <dbReference type="ChEBI" id="CHEBI:30413"/>
    </cofactor>
</comment>
<comment type="subcellular location">
    <subcellularLocation>
        <location>Endoplasmic reticulum membrane</location>
        <topology>Peripheral membrane protein</topology>
    </subcellularLocation>
    <subcellularLocation>
        <location>Microsome membrane</location>
        <topology>Peripheral membrane protein</topology>
    </subcellularLocation>
</comment>
<comment type="induction">
    <text>By phenobarbital.</text>
</comment>
<comment type="similarity">
    <text evidence="2">Belongs to the cytochrome P450 family.</text>
</comment>
<dbReference type="EC" id="1.14.14.1"/>
<dbReference type="PIR" id="S21737">
    <property type="entry name" value="S21737"/>
</dbReference>
<dbReference type="GO" id="GO:0005789">
    <property type="term" value="C:endoplasmic reticulum membrane"/>
    <property type="evidence" value="ECO:0007669"/>
    <property type="project" value="UniProtKB-SubCell"/>
</dbReference>
<dbReference type="GO" id="GO:0046872">
    <property type="term" value="F:metal ion binding"/>
    <property type="evidence" value="ECO:0007669"/>
    <property type="project" value="UniProtKB-KW"/>
</dbReference>
<dbReference type="GO" id="GO:0016712">
    <property type="term" value="F:oxidoreductase activity, acting on paired donors, with incorporation or reduction of molecular oxygen, reduced flavin or flavoprotein as one donor, and incorporation of one atom of oxygen"/>
    <property type="evidence" value="ECO:0007669"/>
    <property type="project" value="UniProtKB-EC"/>
</dbReference>
<feature type="chain" id="PRO_0000051670" description="Cytochrome P450 2A7">
    <location>
        <begin position="1"/>
        <end position="20" status="greater than"/>
    </location>
</feature>
<feature type="unsure residue">
    <location>
        <position position="14"/>
    </location>
</feature>
<feature type="non-terminal residue">
    <location>
        <position position="20"/>
    </location>
</feature>
<evidence type="ECO:0000250" key="1"/>
<evidence type="ECO:0000305" key="2"/>
<reference key="1">
    <citation type="journal article" date="1992" name="Eur. J. Biochem.">
        <title>Purification of two cytochrome P450 isozymes related to CYP2A and CYP3A gene families from monkey (baboon, Papio papio) liver microsomes. Cross reactivity with human forms.</title>
        <authorList>
            <person name="Dalet-Beluche I."/>
            <person name="Boulenc X."/>
            <person name="Fabre G."/>
            <person name="Maurel P."/>
            <person name="Bonfils C."/>
        </authorList>
    </citation>
    <scope>PROTEIN SEQUENCE</scope>
    <source>
        <tissue>Liver</tissue>
    </source>
</reference>
<organism>
    <name type="scientific">Papio sp.</name>
    <name type="common">Baboon</name>
    <dbReference type="NCBI Taxonomy" id="61183"/>
    <lineage>
        <taxon>Eukaryota</taxon>
        <taxon>Metazoa</taxon>
        <taxon>Chordata</taxon>
        <taxon>Craniata</taxon>
        <taxon>Vertebrata</taxon>
        <taxon>Euteleostomi</taxon>
        <taxon>Mammalia</taxon>
        <taxon>Eutheria</taxon>
        <taxon>Euarchontoglires</taxon>
        <taxon>Primates</taxon>
        <taxon>Haplorrhini</taxon>
        <taxon>Catarrhini</taxon>
        <taxon>Cercopithecidae</taxon>
        <taxon>Cercopithecinae</taxon>
        <taxon>Papio</taxon>
    </lineage>
</organism>
<protein>
    <recommendedName>
        <fullName>Cytochrome P450 2A7</fullName>
        <ecNumber>1.14.14.1</ecNumber>
    </recommendedName>
    <alternativeName>
        <fullName>CYPIIA7</fullName>
    </alternativeName>
    <alternativeName>
        <fullName>Coumarin 7-hydroxylase</fullName>
    </alternativeName>
    <alternativeName>
        <fullName>Cytochrome P450 FI</fullName>
    </alternativeName>
</protein>
<sequence>MLASGLLLVALLACLTVMVL</sequence>
<keyword id="KW-0903">Direct protein sequencing</keyword>
<keyword id="KW-0256">Endoplasmic reticulum</keyword>
<keyword id="KW-0349">Heme</keyword>
<keyword id="KW-0408">Iron</keyword>
<keyword id="KW-0472">Membrane</keyword>
<keyword id="KW-0479">Metal-binding</keyword>
<keyword id="KW-0492">Microsome</keyword>
<keyword id="KW-0503">Monooxygenase</keyword>
<keyword id="KW-0560">Oxidoreductase</keyword>
<gene>
    <name type="primary">CYP2A7</name>
</gene>
<accession>P80055</accession>
<name>CP2A7_PAPSP</name>